<protein>
    <recommendedName>
        <fullName evidence="4">Brevinin-2R</fullName>
    </recommendedName>
</protein>
<evidence type="ECO:0000250" key="1">
    <source>
        <dbReference type="UniProtKB" id="P40841"/>
    </source>
</evidence>
<evidence type="ECO:0000255" key="2"/>
<evidence type="ECO:0000269" key="3">
    <source>
    </source>
</evidence>
<evidence type="ECO:0000303" key="4">
    <source>
    </source>
</evidence>
<evidence type="ECO:0000305" key="5"/>
<proteinExistence type="evidence at protein level"/>
<organism>
    <name type="scientific">Pelophylax ridibundus</name>
    <name type="common">Marsh frog</name>
    <name type="synonym">Rana ridibunda</name>
    <dbReference type="NCBI Taxonomy" id="8406"/>
    <lineage>
        <taxon>Eukaryota</taxon>
        <taxon>Metazoa</taxon>
        <taxon>Chordata</taxon>
        <taxon>Craniata</taxon>
        <taxon>Vertebrata</taxon>
        <taxon>Euteleostomi</taxon>
        <taxon>Amphibia</taxon>
        <taxon>Batrachia</taxon>
        <taxon>Anura</taxon>
        <taxon>Neobatrachia</taxon>
        <taxon>Ranoidea</taxon>
        <taxon>Ranidae</taxon>
        <taxon>Pelophylax</taxon>
    </lineage>
</organism>
<keyword id="KW-0878">Amphibian defense peptide</keyword>
<keyword id="KW-0072">Autophagy</keyword>
<keyword id="KW-0903">Direct protein sequencing</keyword>
<keyword id="KW-1015">Disulfide bond</keyword>
<keyword id="KW-0964">Secreted</keyword>
<reference evidence="5" key="1">
    <citation type="journal article" date="2008" name="J. Cell. Mol. Med.">
        <title>Brevinin-2R semi-selectively kills cancer cells by a distinct mechanism, which involves the lysosomal-mitochondrial death pathway.</title>
        <authorList>
            <person name="Ghavami S."/>
            <person name="Asoodeh A."/>
            <person name="Klonisch T."/>
            <person name="Halayko A.J."/>
            <person name="Kadkhoda K."/>
            <person name="Kroczak T.J."/>
            <person name="Gibson S.B."/>
            <person name="Booy E.P."/>
            <person name="Naderi-Manesh H."/>
            <person name="Los M."/>
        </authorList>
    </citation>
    <scope>PROTEIN SEQUENCE</scope>
    <scope>FUNCTION</scope>
    <source>
        <tissue evidence="3">Skin</tissue>
    </source>
</reference>
<dbReference type="SMR" id="P85095"/>
<dbReference type="GO" id="GO:0005576">
    <property type="term" value="C:extracellular region"/>
    <property type="evidence" value="ECO:0007669"/>
    <property type="project" value="UniProtKB-SubCell"/>
</dbReference>
<dbReference type="GO" id="GO:0006914">
    <property type="term" value="P:autophagy"/>
    <property type="evidence" value="ECO:0007669"/>
    <property type="project" value="UniProtKB-KW"/>
</dbReference>
<dbReference type="GO" id="GO:0006952">
    <property type="term" value="P:defense response"/>
    <property type="evidence" value="ECO:0007669"/>
    <property type="project" value="UniProtKB-KW"/>
</dbReference>
<dbReference type="InterPro" id="IPR012521">
    <property type="entry name" value="Antimicrobial_frog_2"/>
</dbReference>
<dbReference type="Pfam" id="PF08023">
    <property type="entry name" value="Antimicrobial_2"/>
    <property type="match status" value="1"/>
</dbReference>
<sequence length="25" mass="2637">KLKNFAKGVAQSLLNKASCKLSGQC</sequence>
<name>BR2_PELRI</name>
<accession>P85095</accession>
<comment type="function">
    <text evidence="3">Cytotoxic to cancer cells, acts via the activation of the lysosomal-mitochondrial death pathway and autophagy-like cell death. Does not show significant hemolytic activity.</text>
</comment>
<comment type="subcellular location">
    <subcellularLocation>
        <location evidence="5">Secreted</location>
    </subcellularLocation>
</comment>
<comment type="tissue specificity">
    <text evidence="5">Expressed by the skin glands.</text>
</comment>
<comment type="similarity">
    <text evidence="2">Belongs to the frog skin active peptide (FSAP) family. Brevinin subfamily.</text>
</comment>
<feature type="peptide" id="PRO_0000347286" description="Brevinin-2R" evidence="3">
    <location>
        <begin position="1"/>
        <end position="25"/>
    </location>
</feature>
<feature type="disulfide bond" evidence="1">
    <location>
        <begin position="19"/>
        <end position="25"/>
    </location>
</feature>